<feature type="chain" id="PRO_0000461408" description="U-theraphotoxin-Lk2a" evidence="1">
    <location>
        <begin position="1"/>
        <end position="49"/>
    </location>
</feature>
<feature type="disulfide bond" evidence="4">
    <location>
        <begin position="4"/>
        <end position="17"/>
    </location>
</feature>
<feature type="disulfide bond" evidence="4">
    <location>
        <begin position="8"/>
        <end position="41"/>
    </location>
</feature>
<feature type="disulfide bond" evidence="4">
    <location>
        <begin position="22"/>
        <end position="24"/>
    </location>
</feature>
<feature type="disulfide bond" evidence="4">
    <location>
        <begin position="35"/>
        <end position="46"/>
    </location>
</feature>
<feature type="unsure residue" description="Assigned by comparison with orthologs and mass spectrometry" evidence="4">
    <location>
        <begin position="21"/>
        <end position="49"/>
    </location>
</feature>
<feature type="unsure residue" description="K or D" evidence="4">
    <location>
        <position position="25"/>
    </location>
</feature>
<name>LK2A_LASKL</name>
<reference key="1">
    <citation type="journal article" date="2023" name="Toxins">
        <title>Two novel mosquitocidal peptides isolated from the venom of the Bahia Scarlet tarantula (Lasiodora klugi).</title>
        <authorList>
            <person name="Ahmed J."/>
            <person name="Walker A.A."/>
            <person name="Perdomo H.D."/>
            <person name="Guo S."/>
            <person name="Nixon S.A."/>
            <person name="Vetter I."/>
            <person name="Okoh H.I."/>
            <person name="Shehu D.M."/>
            <person name="Shuaibu M.N."/>
            <person name="Ndams I.S."/>
            <person name="King G.F."/>
            <person name="Herzig V."/>
        </authorList>
    </citation>
    <scope>PROTEIN SEQUENCE</scope>
    <scope>FUNCTION</scope>
    <scope>MASS SPECTROMETRY</scope>
    <scope>SUBCELLULAR LOCATION</scope>
    <scope>TOXIC DOSE</scope>
    <scope>BIOASSAY</scope>
    <scope>3D-STRUCTURE MODELING</scope>
    <source>
        <tissue>Venom</tissue>
    </source>
</reference>
<evidence type="ECO:0000269" key="1">
    <source>
    </source>
</evidence>
<evidence type="ECO:0000303" key="2">
    <source>
    </source>
</evidence>
<evidence type="ECO:0000305" key="3"/>
<evidence type="ECO:0000305" key="4">
    <source>
    </source>
</evidence>
<accession>P0DRD8</accession>
<comment type="function">
    <text evidence="1">Toxin that causes irreversible contractile paralysis into adult Aedes aegypti resulting in 100% mortality after 24 hours.</text>
</comment>
<comment type="subcellular location">
    <subcellularLocation>
        <location evidence="1">Secreted</location>
    </subcellularLocation>
</comment>
<comment type="tissue specificity">
    <text evidence="4">Expressed by the venom gland.</text>
</comment>
<comment type="mass spectrometry" mass="5718.88" method="Electrospray" evidence="1">
    <text>Monoisotopic mass.</text>
</comment>
<comment type="toxic dose">
    <text evidence="1">LD(50) is 45.4 +- 3.8 pmol/g when injected into A.aegypti.</text>
</comment>
<comment type="miscellaneous">
    <text evidence="3">The primary structure of the mature peptide is identical to that of U1-theraphotoxin-Lp1a (Lasiotoxin-1) from Lasiodora parahybana (AC P0CC18) and U1-theraphotoxin-Lsp1a from Lasiodora sp (strain IBSP 8539) (AC P0CC19).</text>
</comment>
<comment type="similarity">
    <text evidence="3">Belongs to the neurotoxin 12 (Hwtx-2) family. 04 (lasiotoxin) subfamily.</text>
</comment>
<comment type="caution">
    <text evidence="3">The protein sequence was determined by Edman degradation (AA 1-20) and assigned by comparison with orthologs and mass spectrometry (AA 21-49).</text>
</comment>
<protein>
    <recommendedName>
        <fullName evidence="2 3">U-theraphotoxin-Lk2a</fullName>
        <shortName evidence="2">U-TRTX-Lk2a</shortName>
    </recommendedName>
</protein>
<organism>
    <name type="scientific">Lasiodora klugi</name>
    <name type="common">Bahia scarlet tarantula</name>
    <name type="synonym">Mygale klugii</name>
    <dbReference type="NCBI Taxonomy" id="2013881"/>
    <lineage>
        <taxon>Eukaryota</taxon>
        <taxon>Metazoa</taxon>
        <taxon>Ecdysozoa</taxon>
        <taxon>Arthropoda</taxon>
        <taxon>Chelicerata</taxon>
        <taxon>Arachnida</taxon>
        <taxon>Araneae</taxon>
        <taxon>Mygalomorphae</taxon>
        <taxon>Theraphosidae</taxon>
        <taxon>Lasiodora</taxon>
    </lineage>
</organism>
<sequence length="49" mass="5731">FFECTFECDIKKEGKPCKPKGCKCKDKDNKDHKKCSGGWRCKLKLCLKF</sequence>
<keyword id="KW-0903">Direct protein sequencing</keyword>
<keyword id="KW-1015">Disulfide bond</keyword>
<keyword id="KW-0528">Neurotoxin</keyword>
<keyword id="KW-0964">Secreted</keyword>
<keyword id="KW-0800">Toxin</keyword>
<proteinExistence type="evidence at protein level"/>
<dbReference type="GO" id="GO:0005576">
    <property type="term" value="C:extracellular region"/>
    <property type="evidence" value="ECO:0007669"/>
    <property type="project" value="UniProtKB-SubCell"/>
</dbReference>
<dbReference type="GO" id="GO:0090729">
    <property type="term" value="F:toxin activity"/>
    <property type="evidence" value="ECO:0007669"/>
    <property type="project" value="UniProtKB-KW"/>
</dbReference>
<dbReference type="InterPro" id="IPR012625">
    <property type="entry name" value="Hwtx-2-like"/>
</dbReference>
<dbReference type="Pfam" id="PF08089">
    <property type="entry name" value="Toxin_20"/>
    <property type="match status" value="1"/>
</dbReference>
<dbReference type="SUPFAM" id="SSF57059">
    <property type="entry name" value="omega toxin-like"/>
    <property type="match status" value="1"/>
</dbReference>